<dbReference type="EC" id="2.7.7.23" evidence="1"/>
<dbReference type="EC" id="2.3.1.157" evidence="1"/>
<dbReference type="EMBL" id="BA000019">
    <property type="protein sequence ID" value="BAB75620.1"/>
    <property type="molecule type" value="Genomic_DNA"/>
</dbReference>
<dbReference type="PIR" id="AB2296">
    <property type="entry name" value="AB2296"/>
</dbReference>
<dbReference type="RefSeq" id="WP_010998062.1">
    <property type="nucleotide sequence ID" value="NZ_RSCN01000043.1"/>
</dbReference>
<dbReference type="SMR" id="Q8YQB2"/>
<dbReference type="STRING" id="103690.gene:10495963"/>
<dbReference type="KEGG" id="ana:alr3921"/>
<dbReference type="eggNOG" id="COG1207">
    <property type="taxonomic scope" value="Bacteria"/>
</dbReference>
<dbReference type="OrthoDB" id="9775031at2"/>
<dbReference type="UniPathway" id="UPA00113">
    <property type="reaction ID" value="UER00532"/>
</dbReference>
<dbReference type="UniPathway" id="UPA00113">
    <property type="reaction ID" value="UER00533"/>
</dbReference>
<dbReference type="UniPathway" id="UPA00973"/>
<dbReference type="Proteomes" id="UP000002483">
    <property type="component" value="Chromosome"/>
</dbReference>
<dbReference type="GO" id="GO:0031470">
    <property type="term" value="C:carboxysome"/>
    <property type="evidence" value="ECO:0007669"/>
    <property type="project" value="UniProtKB-ARBA"/>
</dbReference>
<dbReference type="GO" id="GO:0005737">
    <property type="term" value="C:cytoplasm"/>
    <property type="evidence" value="ECO:0007669"/>
    <property type="project" value="UniProtKB-SubCell"/>
</dbReference>
<dbReference type="GO" id="GO:0016020">
    <property type="term" value="C:membrane"/>
    <property type="evidence" value="ECO:0007669"/>
    <property type="project" value="GOC"/>
</dbReference>
<dbReference type="GO" id="GO:0019134">
    <property type="term" value="F:glucosamine-1-phosphate N-acetyltransferase activity"/>
    <property type="evidence" value="ECO:0007669"/>
    <property type="project" value="UniProtKB-UniRule"/>
</dbReference>
<dbReference type="GO" id="GO:0000287">
    <property type="term" value="F:magnesium ion binding"/>
    <property type="evidence" value="ECO:0007669"/>
    <property type="project" value="UniProtKB-UniRule"/>
</dbReference>
<dbReference type="GO" id="GO:0043886">
    <property type="term" value="F:structural constituent of carboxysome shell"/>
    <property type="evidence" value="ECO:0007669"/>
    <property type="project" value="UniProtKB-ARBA"/>
</dbReference>
<dbReference type="GO" id="GO:0003977">
    <property type="term" value="F:UDP-N-acetylglucosamine diphosphorylase activity"/>
    <property type="evidence" value="ECO:0007669"/>
    <property type="project" value="UniProtKB-UniRule"/>
</dbReference>
<dbReference type="GO" id="GO:0000902">
    <property type="term" value="P:cell morphogenesis"/>
    <property type="evidence" value="ECO:0007669"/>
    <property type="project" value="UniProtKB-UniRule"/>
</dbReference>
<dbReference type="GO" id="GO:0071555">
    <property type="term" value="P:cell wall organization"/>
    <property type="evidence" value="ECO:0007669"/>
    <property type="project" value="UniProtKB-KW"/>
</dbReference>
<dbReference type="GO" id="GO:0009245">
    <property type="term" value="P:lipid A biosynthetic process"/>
    <property type="evidence" value="ECO:0007669"/>
    <property type="project" value="UniProtKB-UniRule"/>
</dbReference>
<dbReference type="GO" id="GO:0009252">
    <property type="term" value="P:peptidoglycan biosynthetic process"/>
    <property type="evidence" value="ECO:0007669"/>
    <property type="project" value="UniProtKB-UniRule"/>
</dbReference>
<dbReference type="GO" id="GO:0008360">
    <property type="term" value="P:regulation of cell shape"/>
    <property type="evidence" value="ECO:0007669"/>
    <property type="project" value="UniProtKB-KW"/>
</dbReference>
<dbReference type="GO" id="GO:0006048">
    <property type="term" value="P:UDP-N-acetylglucosamine biosynthetic process"/>
    <property type="evidence" value="ECO:0007669"/>
    <property type="project" value="UniProtKB-UniPathway"/>
</dbReference>
<dbReference type="CDD" id="cd02540">
    <property type="entry name" value="GT2_GlmU_N_bac"/>
    <property type="match status" value="1"/>
</dbReference>
<dbReference type="CDD" id="cd03353">
    <property type="entry name" value="LbH_GlmU_C"/>
    <property type="match status" value="1"/>
</dbReference>
<dbReference type="Gene3D" id="2.160.10.10">
    <property type="entry name" value="Hexapeptide repeat proteins"/>
    <property type="match status" value="1"/>
</dbReference>
<dbReference type="Gene3D" id="3.90.550.10">
    <property type="entry name" value="Spore Coat Polysaccharide Biosynthesis Protein SpsA, Chain A"/>
    <property type="match status" value="1"/>
</dbReference>
<dbReference type="HAMAP" id="MF_01631">
    <property type="entry name" value="GlmU"/>
    <property type="match status" value="1"/>
</dbReference>
<dbReference type="InterPro" id="IPR005882">
    <property type="entry name" value="Bifunctional_GlmU"/>
</dbReference>
<dbReference type="InterPro" id="IPR050065">
    <property type="entry name" value="GlmU-like"/>
</dbReference>
<dbReference type="InterPro" id="IPR038009">
    <property type="entry name" value="GlmU_C_LbH"/>
</dbReference>
<dbReference type="InterPro" id="IPR001451">
    <property type="entry name" value="Hexapep"/>
</dbReference>
<dbReference type="InterPro" id="IPR025877">
    <property type="entry name" value="MobA-like_NTP_Trfase"/>
</dbReference>
<dbReference type="InterPro" id="IPR029044">
    <property type="entry name" value="Nucleotide-diphossugar_trans"/>
</dbReference>
<dbReference type="InterPro" id="IPR011004">
    <property type="entry name" value="Trimer_LpxA-like_sf"/>
</dbReference>
<dbReference type="NCBIfam" id="TIGR01173">
    <property type="entry name" value="glmU"/>
    <property type="match status" value="1"/>
</dbReference>
<dbReference type="NCBIfam" id="NF010940">
    <property type="entry name" value="PRK14360.1"/>
    <property type="match status" value="1"/>
</dbReference>
<dbReference type="PANTHER" id="PTHR43584:SF3">
    <property type="entry name" value="BIFUNCTIONAL PROTEIN GLMU"/>
    <property type="match status" value="1"/>
</dbReference>
<dbReference type="PANTHER" id="PTHR43584">
    <property type="entry name" value="NUCLEOTIDYL TRANSFERASE"/>
    <property type="match status" value="1"/>
</dbReference>
<dbReference type="Pfam" id="PF00132">
    <property type="entry name" value="Hexapep"/>
    <property type="match status" value="2"/>
</dbReference>
<dbReference type="Pfam" id="PF12804">
    <property type="entry name" value="NTP_transf_3"/>
    <property type="match status" value="1"/>
</dbReference>
<dbReference type="SUPFAM" id="SSF53448">
    <property type="entry name" value="Nucleotide-diphospho-sugar transferases"/>
    <property type="match status" value="1"/>
</dbReference>
<dbReference type="SUPFAM" id="SSF51161">
    <property type="entry name" value="Trimeric LpxA-like enzymes"/>
    <property type="match status" value="1"/>
</dbReference>
<organism>
    <name type="scientific">Nostoc sp. (strain PCC 7120 / SAG 25.82 / UTEX 2576)</name>
    <dbReference type="NCBI Taxonomy" id="103690"/>
    <lineage>
        <taxon>Bacteria</taxon>
        <taxon>Bacillati</taxon>
        <taxon>Cyanobacteriota</taxon>
        <taxon>Cyanophyceae</taxon>
        <taxon>Nostocales</taxon>
        <taxon>Nostocaceae</taxon>
        <taxon>Nostoc</taxon>
    </lineage>
</organism>
<name>GLMU_NOSS1</name>
<keyword id="KW-0012">Acyltransferase</keyword>
<keyword id="KW-0133">Cell shape</keyword>
<keyword id="KW-0961">Cell wall biogenesis/degradation</keyword>
<keyword id="KW-0963">Cytoplasm</keyword>
<keyword id="KW-0460">Magnesium</keyword>
<keyword id="KW-0479">Metal-binding</keyword>
<keyword id="KW-0511">Multifunctional enzyme</keyword>
<keyword id="KW-0548">Nucleotidyltransferase</keyword>
<keyword id="KW-0573">Peptidoglycan synthesis</keyword>
<keyword id="KW-1185">Reference proteome</keyword>
<keyword id="KW-0677">Repeat</keyword>
<keyword id="KW-0808">Transferase</keyword>
<proteinExistence type="inferred from homology"/>
<gene>
    <name evidence="1" type="primary">glmU</name>
    <name type="ordered locus">alr3921</name>
</gene>
<comment type="function">
    <text evidence="1">Catalyzes the last two sequential reactions in the de novo biosynthetic pathway for UDP-N-acetylglucosamine (UDP-GlcNAc). The C-terminal domain catalyzes the transfer of acetyl group from acetyl coenzyme A to glucosamine-1-phosphate (GlcN-1-P) to produce N-acetylglucosamine-1-phosphate (GlcNAc-1-P), which is converted into UDP-GlcNAc by the transfer of uridine 5-monophosphate (from uridine 5-triphosphate), a reaction catalyzed by the N-terminal domain.</text>
</comment>
<comment type="catalytic activity">
    <reaction evidence="1">
        <text>alpha-D-glucosamine 1-phosphate + acetyl-CoA = N-acetyl-alpha-D-glucosamine 1-phosphate + CoA + H(+)</text>
        <dbReference type="Rhea" id="RHEA:13725"/>
        <dbReference type="ChEBI" id="CHEBI:15378"/>
        <dbReference type="ChEBI" id="CHEBI:57287"/>
        <dbReference type="ChEBI" id="CHEBI:57288"/>
        <dbReference type="ChEBI" id="CHEBI:57776"/>
        <dbReference type="ChEBI" id="CHEBI:58516"/>
        <dbReference type="EC" id="2.3.1.157"/>
    </reaction>
</comment>
<comment type="catalytic activity">
    <reaction evidence="1">
        <text>N-acetyl-alpha-D-glucosamine 1-phosphate + UTP + H(+) = UDP-N-acetyl-alpha-D-glucosamine + diphosphate</text>
        <dbReference type="Rhea" id="RHEA:13509"/>
        <dbReference type="ChEBI" id="CHEBI:15378"/>
        <dbReference type="ChEBI" id="CHEBI:33019"/>
        <dbReference type="ChEBI" id="CHEBI:46398"/>
        <dbReference type="ChEBI" id="CHEBI:57705"/>
        <dbReference type="ChEBI" id="CHEBI:57776"/>
        <dbReference type="EC" id="2.7.7.23"/>
    </reaction>
</comment>
<comment type="cofactor">
    <cofactor evidence="1">
        <name>Mg(2+)</name>
        <dbReference type="ChEBI" id="CHEBI:18420"/>
    </cofactor>
    <text evidence="1">Binds 1 Mg(2+) ion per subunit.</text>
</comment>
<comment type="pathway">
    <text evidence="1">Nucleotide-sugar biosynthesis; UDP-N-acetyl-alpha-D-glucosamine biosynthesis; N-acetyl-alpha-D-glucosamine 1-phosphate from alpha-D-glucosamine 6-phosphate (route II): step 2/2.</text>
</comment>
<comment type="pathway">
    <text evidence="1">Nucleotide-sugar biosynthesis; UDP-N-acetyl-alpha-D-glucosamine biosynthesis; UDP-N-acetyl-alpha-D-glucosamine from N-acetyl-alpha-D-glucosamine 1-phosphate: step 1/1.</text>
</comment>
<comment type="pathway">
    <text evidence="1">Bacterial outer membrane biogenesis; LPS lipid A biosynthesis.</text>
</comment>
<comment type="subunit">
    <text evidence="1">Homotrimer.</text>
</comment>
<comment type="subcellular location">
    <subcellularLocation>
        <location evidence="1">Cytoplasm</location>
    </subcellularLocation>
</comment>
<comment type="similarity">
    <text evidence="1">In the N-terminal section; belongs to the N-acetylglucosamine-1-phosphate uridyltransferase family.</text>
</comment>
<comment type="similarity">
    <text evidence="1">In the C-terminal section; belongs to the transferase hexapeptide repeat family.</text>
</comment>
<sequence length="451" mass="49192">MVVVAILAAGRGTRMKSDLPKVLHSLGGRSLVERVIDSVEPLSPSRRLVIVGYQAEQVKTGLQSPNLEFVEQTVQLGTGHAIQQLLPHLEGYRGDLLVLNGDVPLLRTQTLEQLLQTHQTNQNAATILTSHLPNPKGYGRVFCNGNNIVQQIVEDKDCSPAQRQNHRINAGIYCFRWENLAQVLPHLEANNAQKEYYLTDAVTQVGQVMAVDVEDYQEILGINDRLQLATAYEILQRRVKEQWMMAGVTLIDPNSITIDDTVELQPDVIIEPQTHLRGSTVIQSGSRIGPGSLIENSQLGANVTVHYSVVTDSTIQDGTKIGPYAHLRGHAQVGANCRIGNFVELKNTELGDRTNVAHLSYLGDATAGTQVNIGAGTITANYDGVKKHRTKIGDRTKTGSNSVLVAPVTLGDDVYVAAGSTVTEDVPNDSLVIARTRQVIKLGWRRKSGES</sequence>
<accession>Q8YQB2</accession>
<reference key="1">
    <citation type="journal article" date="2001" name="DNA Res.">
        <title>Complete genomic sequence of the filamentous nitrogen-fixing cyanobacterium Anabaena sp. strain PCC 7120.</title>
        <authorList>
            <person name="Kaneko T."/>
            <person name="Nakamura Y."/>
            <person name="Wolk C.P."/>
            <person name="Kuritz T."/>
            <person name="Sasamoto S."/>
            <person name="Watanabe A."/>
            <person name="Iriguchi M."/>
            <person name="Ishikawa A."/>
            <person name="Kawashima K."/>
            <person name="Kimura T."/>
            <person name="Kishida Y."/>
            <person name="Kohara M."/>
            <person name="Matsumoto M."/>
            <person name="Matsuno A."/>
            <person name="Muraki A."/>
            <person name="Nakazaki N."/>
            <person name="Shimpo S."/>
            <person name="Sugimoto M."/>
            <person name="Takazawa M."/>
            <person name="Yamada M."/>
            <person name="Yasuda M."/>
            <person name="Tabata S."/>
        </authorList>
    </citation>
    <scope>NUCLEOTIDE SEQUENCE [LARGE SCALE GENOMIC DNA]</scope>
    <source>
        <strain>PCC 7120 / SAG 25.82 / UTEX 2576</strain>
    </source>
</reference>
<evidence type="ECO:0000255" key="1">
    <source>
        <dbReference type="HAMAP-Rule" id="MF_01631"/>
    </source>
</evidence>
<protein>
    <recommendedName>
        <fullName evidence="1">Bifunctional protein GlmU</fullName>
    </recommendedName>
    <domain>
        <recommendedName>
            <fullName evidence="1">UDP-N-acetylglucosamine pyrophosphorylase</fullName>
            <ecNumber evidence="1">2.7.7.23</ecNumber>
        </recommendedName>
        <alternativeName>
            <fullName evidence="1">N-acetylglucosamine-1-phosphate uridyltransferase</fullName>
        </alternativeName>
    </domain>
    <domain>
        <recommendedName>
            <fullName evidence="1">Glucosamine-1-phosphate N-acetyltransferase</fullName>
            <ecNumber evidence="1">2.3.1.157</ecNumber>
        </recommendedName>
    </domain>
</protein>
<feature type="chain" id="PRO_0000233722" description="Bifunctional protein GlmU">
    <location>
        <begin position="1"/>
        <end position="451"/>
    </location>
</feature>
<feature type="region of interest" description="Pyrophosphorylase" evidence="1">
    <location>
        <begin position="1"/>
        <end position="225"/>
    </location>
</feature>
<feature type="region of interest" description="Linker" evidence="1">
    <location>
        <begin position="226"/>
        <end position="246"/>
    </location>
</feature>
<feature type="region of interest" description="N-acetyltransferase" evidence="1">
    <location>
        <begin position="247"/>
        <end position="451"/>
    </location>
</feature>
<feature type="active site" description="Proton acceptor" evidence="1">
    <location>
        <position position="358"/>
    </location>
</feature>
<feature type="binding site" evidence="1">
    <location>
        <begin position="7"/>
        <end position="10"/>
    </location>
    <ligand>
        <name>UDP-N-acetyl-alpha-D-glucosamine</name>
        <dbReference type="ChEBI" id="CHEBI:57705"/>
    </ligand>
</feature>
<feature type="binding site" evidence="1">
    <location>
        <position position="21"/>
    </location>
    <ligand>
        <name>UDP-N-acetyl-alpha-D-glucosamine</name>
        <dbReference type="ChEBI" id="CHEBI:57705"/>
    </ligand>
</feature>
<feature type="binding site" evidence="1">
    <location>
        <position position="72"/>
    </location>
    <ligand>
        <name>UDP-N-acetyl-alpha-D-glucosamine</name>
        <dbReference type="ChEBI" id="CHEBI:57705"/>
    </ligand>
</feature>
<feature type="binding site" evidence="1">
    <location>
        <begin position="77"/>
        <end position="78"/>
    </location>
    <ligand>
        <name>UDP-N-acetyl-alpha-D-glucosamine</name>
        <dbReference type="ChEBI" id="CHEBI:57705"/>
    </ligand>
</feature>
<feature type="binding site" evidence="1">
    <location>
        <position position="102"/>
    </location>
    <ligand>
        <name>Mg(2+)</name>
        <dbReference type="ChEBI" id="CHEBI:18420"/>
    </ligand>
</feature>
<feature type="binding site" evidence="1">
    <location>
        <position position="139"/>
    </location>
    <ligand>
        <name>UDP-N-acetyl-alpha-D-glucosamine</name>
        <dbReference type="ChEBI" id="CHEBI:57705"/>
    </ligand>
</feature>
<feature type="binding site" evidence="1">
    <location>
        <position position="154"/>
    </location>
    <ligand>
        <name>UDP-N-acetyl-alpha-D-glucosamine</name>
        <dbReference type="ChEBI" id="CHEBI:57705"/>
    </ligand>
</feature>
<feature type="binding site" evidence="1">
    <location>
        <position position="169"/>
    </location>
    <ligand>
        <name>UDP-N-acetyl-alpha-D-glucosamine</name>
        <dbReference type="ChEBI" id="CHEBI:57705"/>
    </ligand>
</feature>
<feature type="binding site" evidence="1">
    <location>
        <position position="223"/>
    </location>
    <ligand>
        <name>Mg(2+)</name>
        <dbReference type="ChEBI" id="CHEBI:18420"/>
    </ligand>
</feature>
<feature type="binding site" evidence="1">
    <location>
        <position position="223"/>
    </location>
    <ligand>
        <name>UDP-N-acetyl-alpha-D-glucosamine</name>
        <dbReference type="ChEBI" id="CHEBI:57705"/>
    </ligand>
</feature>
<feature type="binding site" evidence="1">
    <location>
        <position position="328"/>
    </location>
    <ligand>
        <name>UDP-N-acetyl-alpha-D-glucosamine</name>
        <dbReference type="ChEBI" id="CHEBI:57705"/>
    </ligand>
</feature>
<feature type="binding site" evidence="1">
    <location>
        <position position="346"/>
    </location>
    <ligand>
        <name>UDP-N-acetyl-alpha-D-glucosamine</name>
        <dbReference type="ChEBI" id="CHEBI:57705"/>
    </ligand>
</feature>
<feature type="binding site" evidence="1">
    <location>
        <position position="361"/>
    </location>
    <ligand>
        <name>UDP-N-acetyl-alpha-D-glucosamine</name>
        <dbReference type="ChEBI" id="CHEBI:57705"/>
    </ligand>
</feature>
<feature type="binding site" evidence="1">
    <location>
        <position position="372"/>
    </location>
    <ligand>
        <name>UDP-N-acetyl-alpha-D-glucosamine</name>
        <dbReference type="ChEBI" id="CHEBI:57705"/>
    </ligand>
</feature>
<feature type="binding site" evidence="1">
    <location>
        <position position="375"/>
    </location>
    <ligand>
        <name>acetyl-CoA</name>
        <dbReference type="ChEBI" id="CHEBI:57288"/>
    </ligand>
</feature>
<feature type="binding site" evidence="1">
    <location>
        <begin position="381"/>
        <end position="382"/>
    </location>
    <ligand>
        <name>acetyl-CoA</name>
        <dbReference type="ChEBI" id="CHEBI:57288"/>
    </ligand>
</feature>
<feature type="binding site" evidence="1">
    <location>
        <position position="400"/>
    </location>
    <ligand>
        <name>acetyl-CoA</name>
        <dbReference type="ChEBI" id="CHEBI:57288"/>
    </ligand>
</feature>
<feature type="binding site" evidence="1">
    <location>
        <position position="418"/>
    </location>
    <ligand>
        <name>acetyl-CoA</name>
        <dbReference type="ChEBI" id="CHEBI:57288"/>
    </ligand>
</feature>
<feature type="binding site" evidence="1">
    <location>
        <position position="435"/>
    </location>
    <ligand>
        <name>acetyl-CoA</name>
        <dbReference type="ChEBI" id="CHEBI:57288"/>
    </ligand>
</feature>